<accession>B7N1C6</accession>
<protein>
    <recommendedName>
        <fullName evidence="1">Sulfurtransferase TusD</fullName>
        <ecNumber evidence="1">2.8.1.-</ecNumber>
    </recommendedName>
    <alternativeName>
        <fullName evidence="1">tRNA 2-thiouridine synthesizing protein D</fullName>
    </alternativeName>
</protein>
<evidence type="ECO:0000255" key="1">
    <source>
        <dbReference type="HAMAP-Rule" id="MF_00390"/>
    </source>
</evidence>
<reference key="1">
    <citation type="journal article" date="2009" name="PLoS Genet.">
        <title>Organised genome dynamics in the Escherichia coli species results in highly diverse adaptive paths.</title>
        <authorList>
            <person name="Touchon M."/>
            <person name="Hoede C."/>
            <person name="Tenaillon O."/>
            <person name="Barbe V."/>
            <person name="Baeriswyl S."/>
            <person name="Bidet P."/>
            <person name="Bingen E."/>
            <person name="Bonacorsi S."/>
            <person name="Bouchier C."/>
            <person name="Bouvet O."/>
            <person name="Calteau A."/>
            <person name="Chiapello H."/>
            <person name="Clermont O."/>
            <person name="Cruveiller S."/>
            <person name="Danchin A."/>
            <person name="Diard M."/>
            <person name="Dossat C."/>
            <person name="Karoui M.E."/>
            <person name="Frapy E."/>
            <person name="Garry L."/>
            <person name="Ghigo J.M."/>
            <person name="Gilles A.M."/>
            <person name="Johnson J."/>
            <person name="Le Bouguenec C."/>
            <person name="Lescat M."/>
            <person name="Mangenot S."/>
            <person name="Martinez-Jehanne V."/>
            <person name="Matic I."/>
            <person name="Nassif X."/>
            <person name="Oztas S."/>
            <person name="Petit M.A."/>
            <person name="Pichon C."/>
            <person name="Rouy Z."/>
            <person name="Ruf C.S."/>
            <person name="Schneider D."/>
            <person name="Tourret J."/>
            <person name="Vacherie B."/>
            <person name="Vallenet D."/>
            <person name="Medigue C."/>
            <person name="Rocha E.P.C."/>
            <person name="Denamur E."/>
        </authorList>
    </citation>
    <scope>NUCLEOTIDE SEQUENCE [LARGE SCALE GENOMIC DNA]</scope>
    <source>
        <strain>ED1a</strain>
    </source>
</reference>
<sequence>MRFAIVVTGPAYGTQQASSAFQFAQALIAEGHELSSVFFYREGVYNANQLTSPASDEFDLVRGWQQLNAQHGVALNICVAAALRRGVVDETEAGRLGLASSNLQPGFTLSGLGALAEASLTCDRVVQF</sequence>
<proteinExistence type="inferred from homology"/>
<organism>
    <name type="scientific">Escherichia coli O81 (strain ED1a)</name>
    <dbReference type="NCBI Taxonomy" id="585397"/>
    <lineage>
        <taxon>Bacteria</taxon>
        <taxon>Pseudomonadati</taxon>
        <taxon>Pseudomonadota</taxon>
        <taxon>Gammaproteobacteria</taxon>
        <taxon>Enterobacterales</taxon>
        <taxon>Enterobacteriaceae</taxon>
        <taxon>Escherichia</taxon>
    </lineage>
</organism>
<gene>
    <name evidence="1" type="primary">tusD</name>
    <name type="ordered locus">ECED1_4005</name>
</gene>
<dbReference type="EC" id="2.8.1.-" evidence="1"/>
<dbReference type="EMBL" id="CU928162">
    <property type="protein sequence ID" value="CAR10144.2"/>
    <property type="molecule type" value="Genomic_DNA"/>
</dbReference>
<dbReference type="RefSeq" id="WP_001209693.1">
    <property type="nucleotide sequence ID" value="NC_011745.1"/>
</dbReference>
<dbReference type="SMR" id="B7N1C6"/>
<dbReference type="KEGG" id="ecq:ECED1_4005"/>
<dbReference type="HOGENOM" id="CLU_132095_0_0_6"/>
<dbReference type="Proteomes" id="UP000000748">
    <property type="component" value="Chromosome"/>
</dbReference>
<dbReference type="GO" id="GO:1990228">
    <property type="term" value="C:sulfurtransferase complex"/>
    <property type="evidence" value="ECO:0007669"/>
    <property type="project" value="TreeGrafter"/>
</dbReference>
<dbReference type="GO" id="GO:0097163">
    <property type="term" value="F:sulfur carrier activity"/>
    <property type="evidence" value="ECO:0007669"/>
    <property type="project" value="TreeGrafter"/>
</dbReference>
<dbReference type="GO" id="GO:0016783">
    <property type="term" value="F:sulfurtransferase activity"/>
    <property type="evidence" value="ECO:0007669"/>
    <property type="project" value="UniProtKB-UniRule"/>
</dbReference>
<dbReference type="GO" id="GO:0002143">
    <property type="term" value="P:tRNA wobble position uridine thiolation"/>
    <property type="evidence" value="ECO:0007669"/>
    <property type="project" value="TreeGrafter"/>
</dbReference>
<dbReference type="FunFam" id="3.40.1260.10:FF:000001">
    <property type="entry name" value="Sulfurtransferase TusD"/>
    <property type="match status" value="1"/>
</dbReference>
<dbReference type="Gene3D" id="3.40.1260.10">
    <property type="entry name" value="DsrEFH-like"/>
    <property type="match status" value="1"/>
</dbReference>
<dbReference type="HAMAP" id="MF_00390">
    <property type="entry name" value="Thiourid_synth_D"/>
    <property type="match status" value="1"/>
</dbReference>
<dbReference type="InterPro" id="IPR027396">
    <property type="entry name" value="DsrEFH-like"/>
</dbReference>
<dbReference type="InterPro" id="IPR003787">
    <property type="entry name" value="Sulphur_relay_DsrE/F-like"/>
</dbReference>
<dbReference type="InterPro" id="IPR017463">
    <property type="entry name" value="Sulphur_relay_TusD/DsrE"/>
</dbReference>
<dbReference type="NCBIfam" id="NF001237">
    <property type="entry name" value="PRK00207.1"/>
    <property type="match status" value="1"/>
</dbReference>
<dbReference type="NCBIfam" id="TIGR03012">
    <property type="entry name" value="sulf_tusD_dsrE"/>
    <property type="match status" value="1"/>
</dbReference>
<dbReference type="PANTHER" id="PTHR34874">
    <property type="entry name" value="PROTEIN YCHN"/>
    <property type="match status" value="1"/>
</dbReference>
<dbReference type="PANTHER" id="PTHR34874:SF3">
    <property type="entry name" value="SULFURTRANSFERASE TUSD"/>
    <property type="match status" value="1"/>
</dbReference>
<dbReference type="Pfam" id="PF02635">
    <property type="entry name" value="DsrE"/>
    <property type="match status" value="1"/>
</dbReference>
<dbReference type="SUPFAM" id="SSF75169">
    <property type="entry name" value="DsrEFH-like"/>
    <property type="match status" value="1"/>
</dbReference>
<keyword id="KW-0963">Cytoplasm</keyword>
<keyword id="KW-0808">Transferase</keyword>
<keyword id="KW-0819">tRNA processing</keyword>
<name>TUSD_ECO81</name>
<feature type="chain" id="PRO_1000134416" description="Sulfurtransferase TusD">
    <location>
        <begin position="1"/>
        <end position="128"/>
    </location>
</feature>
<feature type="active site" description="Cysteine persulfide intermediate" evidence="1">
    <location>
        <position position="78"/>
    </location>
</feature>
<comment type="function">
    <text evidence="1">Part of a sulfur-relay system required for 2-thiolation of 5-methylaminomethyl-2-thiouridine (mnm(5)s(2)U) at tRNA wobble positions. Accepts sulfur from TusA and transfers it in turn to TusE.</text>
</comment>
<comment type="subunit">
    <text evidence="1">Heterohexamer, formed by a dimer of trimers. The hexameric TusBCD complex contains 2 copies each of TusB, TusC and TusD. The TusBCD complex interacts with TusE.</text>
</comment>
<comment type="subcellular location">
    <subcellularLocation>
        <location evidence="1">Cytoplasm</location>
    </subcellularLocation>
</comment>
<comment type="similarity">
    <text evidence="1">Belongs to the DsrE/TusD family.</text>
</comment>